<dbReference type="EC" id="2.7.1.1" evidence="3"/>
<dbReference type="EMBL" id="AB248868">
    <property type="protein sequence ID" value="BAF45850.1"/>
    <property type="molecule type" value="mRNA"/>
</dbReference>
<dbReference type="RefSeq" id="NP_001075245.1">
    <property type="nucleotide sequence ID" value="NM_001081776.1"/>
</dbReference>
<dbReference type="SMR" id="A2PYL6"/>
<dbReference type="FunCoup" id="A2PYL6">
    <property type="interactions" value="242"/>
</dbReference>
<dbReference type="STRING" id="9796.ENSECAP00000020361"/>
<dbReference type="PaxDb" id="9796-ENSECAP00000020361"/>
<dbReference type="PeptideAtlas" id="A2PYL6"/>
<dbReference type="Ensembl" id="ENSECAT00000129718.1">
    <property type="protein sequence ID" value="ENSECAP00000060196.1"/>
    <property type="gene ID" value="ENSECAG00000021905.4"/>
</dbReference>
<dbReference type="GeneID" id="100009677"/>
<dbReference type="KEGG" id="ecb:100009677"/>
<dbReference type="CTD" id="3099"/>
<dbReference type="VGNC" id="VGNC:49461">
    <property type="gene designation" value="HK2"/>
</dbReference>
<dbReference type="GeneTree" id="ENSGT00950000182787"/>
<dbReference type="InParanoid" id="A2PYL6"/>
<dbReference type="OMA" id="SYLVSWT"/>
<dbReference type="OrthoDB" id="419537at2759"/>
<dbReference type="UniPathway" id="UPA00109">
    <property type="reaction ID" value="UER00180"/>
</dbReference>
<dbReference type="UniPathway" id="UPA00242"/>
<dbReference type="Proteomes" id="UP000002281">
    <property type="component" value="Chromosome 15"/>
</dbReference>
<dbReference type="Bgee" id="ENSECAG00000021905">
    <property type="expression patterns" value="Expressed in inner cell mass and 21 other cell types or tissues"/>
</dbReference>
<dbReference type="ExpressionAtlas" id="A2PYL6">
    <property type="expression patterns" value="baseline"/>
</dbReference>
<dbReference type="GO" id="GO:0005813">
    <property type="term" value="C:centrosome"/>
    <property type="evidence" value="ECO:0007669"/>
    <property type="project" value="Ensembl"/>
</dbReference>
<dbReference type="GO" id="GO:0005829">
    <property type="term" value="C:cytosol"/>
    <property type="evidence" value="ECO:0000318"/>
    <property type="project" value="GO_Central"/>
</dbReference>
<dbReference type="GO" id="GO:0005741">
    <property type="term" value="C:mitochondrial outer membrane"/>
    <property type="evidence" value="ECO:0007669"/>
    <property type="project" value="UniProtKB-SubCell"/>
</dbReference>
<dbReference type="GO" id="GO:0005739">
    <property type="term" value="C:mitochondrion"/>
    <property type="evidence" value="ECO:0000318"/>
    <property type="project" value="GO_Central"/>
</dbReference>
<dbReference type="GO" id="GO:0005524">
    <property type="term" value="F:ATP binding"/>
    <property type="evidence" value="ECO:0007669"/>
    <property type="project" value="UniProtKB-KW"/>
</dbReference>
<dbReference type="GO" id="GO:0005536">
    <property type="term" value="F:D-glucose binding"/>
    <property type="evidence" value="ECO:0007669"/>
    <property type="project" value="InterPro"/>
</dbReference>
<dbReference type="GO" id="GO:0008865">
    <property type="term" value="F:fructokinase activity"/>
    <property type="evidence" value="ECO:0000250"/>
    <property type="project" value="UniProtKB"/>
</dbReference>
<dbReference type="GO" id="GO:0004340">
    <property type="term" value="F:glucokinase activity"/>
    <property type="evidence" value="ECO:0000250"/>
    <property type="project" value="UniProtKB"/>
</dbReference>
<dbReference type="GO" id="GO:0004396">
    <property type="term" value="F:hexokinase activity"/>
    <property type="evidence" value="ECO:0000250"/>
    <property type="project" value="UniProtKB"/>
</dbReference>
<dbReference type="GO" id="GO:0008637">
    <property type="term" value="P:apoptotic mitochondrial changes"/>
    <property type="evidence" value="ECO:0007669"/>
    <property type="project" value="Ensembl"/>
</dbReference>
<dbReference type="GO" id="GO:0061621">
    <property type="term" value="P:canonical glycolysis"/>
    <property type="evidence" value="ECO:0007669"/>
    <property type="project" value="Ensembl"/>
</dbReference>
<dbReference type="GO" id="GO:1990830">
    <property type="term" value="P:cellular response to leukemia inhibitory factor"/>
    <property type="evidence" value="ECO:0007669"/>
    <property type="project" value="Ensembl"/>
</dbReference>
<dbReference type="GO" id="GO:0072655">
    <property type="term" value="P:establishment of protein localization to mitochondrion"/>
    <property type="evidence" value="ECO:0007669"/>
    <property type="project" value="Ensembl"/>
</dbReference>
<dbReference type="GO" id="GO:0006002">
    <property type="term" value="P:fructose 6-phosphate metabolic process"/>
    <property type="evidence" value="ECO:0000250"/>
    <property type="project" value="UniProtKB"/>
</dbReference>
<dbReference type="GO" id="GO:0051156">
    <property type="term" value="P:glucose 6-phosphate metabolic process"/>
    <property type="evidence" value="ECO:0000250"/>
    <property type="project" value="UniProtKB"/>
</dbReference>
<dbReference type="GO" id="GO:0006006">
    <property type="term" value="P:glucose metabolic process"/>
    <property type="evidence" value="ECO:0000318"/>
    <property type="project" value="GO_Central"/>
</dbReference>
<dbReference type="GO" id="GO:0006096">
    <property type="term" value="P:glycolytic process"/>
    <property type="evidence" value="ECO:0000318"/>
    <property type="project" value="GO_Central"/>
</dbReference>
<dbReference type="GO" id="GO:0001678">
    <property type="term" value="P:intracellular glucose homeostasis"/>
    <property type="evidence" value="ECO:0000318"/>
    <property type="project" value="GO_Central"/>
</dbReference>
<dbReference type="GO" id="GO:0072656">
    <property type="term" value="P:maintenance of protein location in mitochondrion"/>
    <property type="evidence" value="ECO:0007669"/>
    <property type="project" value="Ensembl"/>
</dbReference>
<dbReference type="GO" id="GO:0035795">
    <property type="term" value="P:negative regulation of mitochondrial membrane permeability"/>
    <property type="evidence" value="ECO:0007669"/>
    <property type="project" value="Ensembl"/>
</dbReference>
<dbReference type="GO" id="GO:2000378">
    <property type="term" value="P:negative regulation of reactive oxygen species metabolic process"/>
    <property type="evidence" value="ECO:0007669"/>
    <property type="project" value="Ensembl"/>
</dbReference>
<dbReference type="GO" id="GO:0045766">
    <property type="term" value="P:positive regulation of angiogenesis"/>
    <property type="evidence" value="ECO:0007669"/>
    <property type="project" value="Ensembl"/>
</dbReference>
<dbReference type="GO" id="GO:1905091">
    <property type="term" value="P:positive regulation of type 2 mitophagy"/>
    <property type="evidence" value="ECO:0007669"/>
    <property type="project" value="Ensembl"/>
</dbReference>
<dbReference type="GO" id="GO:0046324">
    <property type="term" value="P:regulation of D-glucose import"/>
    <property type="evidence" value="ECO:0007669"/>
    <property type="project" value="Ensembl"/>
</dbReference>
<dbReference type="CDD" id="cd24128">
    <property type="entry name" value="ASKHA_NBD_HK2_meta_rpt2"/>
    <property type="match status" value="1"/>
</dbReference>
<dbReference type="FunFam" id="3.30.420.40:FF:000015">
    <property type="entry name" value="Hexokinase 1"/>
    <property type="match status" value="1"/>
</dbReference>
<dbReference type="FunFam" id="3.40.367.20:FF:000001">
    <property type="entry name" value="Hexokinase 1"/>
    <property type="match status" value="1"/>
</dbReference>
<dbReference type="FunFam" id="3.40.367.20:FF:000020">
    <property type="entry name" value="Hexokinase-1"/>
    <property type="match status" value="1"/>
</dbReference>
<dbReference type="FunFam" id="3.30.420.40:FF:000805">
    <property type="entry name" value="Hexokinase-2"/>
    <property type="match status" value="1"/>
</dbReference>
<dbReference type="Gene3D" id="3.30.420.40">
    <property type="match status" value="2"/>
</dbReference>
<dbReference type="Gene3D" id="3.40.367.20">
    <property type="match status" value="2"/>
</dbReference>
<dbReference type="InterPro" id="IPR043129">
    <property type="entry name" value="ATPase_NBD"/>
</dbReference>
<dbReference type="InterPro" id="IPR001312">
    <property type="entry name" value="Hexokinase"/>
</dbReference>
<dbReference type="InterPro" id="IPR019807">
    <property type="entry name" value="Hexokinase_BS"/>
</dbReference>
<dbReference type="InterPro" id="IPR022673">
    <property type="entry name" value="Hexokinase_C"/>
</dbReference>
<dbReference type="InterPro" id="IPR022672">
    <property type="entry name" value="Hexokinase_N"/>
</dbReference>
<dbReference type="PANTHER" id="PTHR19443">
    <property type="entry name" value="HEXOKINASE"/>
    <property type="match status" value="1"/>
</dbReference>
<dbReference type="PANTHER" id="PTHR19443:SF4">
    <property type="entry name" value="HEXOKINASE-2"/>
    <property type="match status" value="1"/>
</dbReference>
<dbReference type="Pfam" id="PF00349">
    <property type="entry name" value="Hexokinase_1"/>
    <property type="match status" value="2"/>
</dbReference>
<dbReference type="Pfam" id="PF03727">
    <property type="entry name" value="Hexokinase_2"/>
    <property type="match status" value="2"/>
</dbReference>
<dbReference type="PRINTS" id="PR00475">
    <property type="entry name" value="HEXOKINASE"/>
</dbReference>
<dbReference type="SUPFAM" id="SSF53067">
    <property type="entry name" value="Actin-like ATPase domain"/>
    <property type="match status" value="4"/>
</dbReference>
<dbReference type="PROSITE" id="PS00378">
    <property type="entry name" value="HEXOKINASE_1"/>
    <property type="match status" value="2"/>
</dbReference>
<dbReference type="PROSITE" id="PS51748">
    <property type="entry name" value="HEXOKINASE_2"/>
    <property type="match status" value="2"/>
</dbReference>
<protein>
    <recommendedName>
        <fullName evidence="6">Hexokinase-2</fullName>
        <ecNumber evidence="3">2.7.1.1</ecNumber>
    </recommendedName>
    <alternativeName>
        <fullName evidence="5">Hexokinase type II</fullName>
        <shortName evidence="5">HK II</shortName>
    </alternativeName>
</protein>
<name>HXK2_HORSE</name>
<evidence type="ECO:0000250" key="1">
    <source>
        <dbReference type="UniProtKB" id="P19367"/>
    </source>
</evidence>
<evidence type="ECO:0000250" key="2">
    <source>
        <dbReference type="UniProtKB" id="P27881"/>
    </source>
</evidence>
<evidence type="ECO:0000250" key="3">
    <source>
        <dbReference type="UniProtKB" id="P52789"/>
    </source>
</evidence>
<evidence type="ECO:0000255" key="4">
    <source>
        <dbReference type="PROSITE-ProRule" id="PRU01084"/>
    </source>
</evidence>
<evidence type="ECO:0000303" key="5">
    <source>
    </source>
</evidence>
<evidence type="ECO:0000305" key="6"/>
<reference key="1">
    <citation type="journal article" date="2007" name="DNA Seq.">
        <title>Sequencing of cDNA and proximal promoter of equine hexokinase II gene.</title>
        <authorList>
            <person name="Sato T."/>
            <person name="Itou T."/>
            <person name="Sato G."/>
            <person name="Kobayashi Y."/>
            <person name="Endo H."/>
            <person name="Sakai T."/>
        </authorList>
    </citation>
    <scope>NUCLEOTIDE SEQUENCE [MRNA]</scope>
    <source>
        <tissue>Skeletal muscle</tissue>
    </source>
</reference>
<sequence length="917" mass="102654">MIASHLLAYFFTELNHDQVQKVDQYLYHMRLSDETLLEISKRFRKEMEKGLAATTHPTASVKMLPTFVRSTPDGTEHGEFLALDLGGTNFRVLRVRVTDNGLQKVEMENQIYAIPEDIMQGSGTQLFDHIAGCLANFMDKLQIKDKKLPLGFTFSFPCIQTKLDESFLVSWTKGFKSRGVEGRDVVTLIRKAIQRRGDFDIDIVAMVNDTVATMMTCGYDDQNCEIGLIVGMGSNACYMEEMRYIDTVEGDEGRMCINMEWGAFGDDGTLDDIRTEFDQEIDMGSLNPGQQLFEKMISGMYMGELVRLILVKMAKEELLFRGKLSPELLTTGRFETKDVSEIEGEKDGIQKAREVLVRLGMDPTQEDCVATHRICQIVSTRSASLCAATLAAVLQRIKENKGEERLRSTIGVDGSVYKKHPHFAKRLQKTVRRLVPNCDIRFLCSEDGSGKGAAMVTAVAYRLAYQHRARLKTLEPLKLSREQLLEVKRRMKVEMERGLSKETHASAPVKMLPTYVCATPDGTEKGDFLALDLGGTNFRVLLVRVRNGKRRGVEMHNKIYSIPQDIMHGTGDELFDHIVQCIADFLEYMGMKGVSLPLGFTFSFPCQQNRLDESILLKWTKGFKASGCEGEDVVTLLKEAIHRREEFDLDVVAVVNDTVGTMMTCGYEDPHCEVGLIVGTGSNACYMEEMRNVELVEGEEGRMCVNTEWGAFGDNGCLDDFCTEFDVAVDELSLNPGKQRFEKMMSGMYLGEIVRNILIDFTKRGLLFRGRISERLKTRGIFETKFLSQIESDCLALQQVRAILQHLGLESTCDDSIIVKEVCTVVAQRAAQLCGAGMAAVVDKIRENRGLDTLKVTVGVDGTLYKLHPHFAKVMRETVKDLAPKCDVSFLESEDGSGKGAALITAVACRIREAGQR</sequence>
<gene>
    <name evidence="3" type="primary">HK2</name>
</gene>
<proteinExistence type="evidence at transcript level"/>
<organism>
    <name type="scientific">Equus caballus</name>
    <name type="common">Horse</name>
    <dbReference type="NCBI Taxonomy" id="9796"/>
    <lineage>
        <taxon>Eukaryota</taxon>
        <taxon>Metazoa</taxon>
        <taxon>Chordata</taxon>
        <taxon>Craniata</taxon>
        <taxon>Vertebrata</taxon>
        <taxon>Euteleostomi</taxon>
        <taxon>Mammalia</taxon>
        <taxon>Eutheria</taxon>
        <taxon>Laurasiatheria</taxon>
        <taxon>Perissodactyla</taxon>
        <taxon>Equidae</taxon>
        <taxon>Equus</taxon>
    </lineage>
</organism>
<comment type="function">
    <text evidence="3">Catalyzes the phosphorylation of hexose, such as D-glucose and D-fructose, to hexose 6-phosphate (D-glucose 6-phosphate and D-fructose 6-phosphate, respectively). Mediates the initial step of glycolysis by catalyzing phosphorylation of D-glucose to D-glucose 6-phosphate. Plays a key role in maintaining the integrity of the outer mitochondrial membrane by preventing the release of apoptogenic molecules from the intermembrane space and subsequent apoptosis.</text>
</comment>
<comment type="catalytic activity">
    <reaction evidence="3">
        <text>a D-hexose + ATP = a D-hexose 6-phosphate + ADP + H(+)</text>
        <dbReference type="Rhea" id="RHEA:22740"/>
        <dbReference type="ChEBI" id="CHEBI:4194"/>
        <dbReference type="ChEBI" id="CHEBI:15378"/>
        <dbReference type="ChEBI" id="CHEBI:30616"/>
        <dbReference type="ChEBI" id="CHEBI:229467"/>
        <dbReference type="ChEBI" id="CHEBI:456216"/>
        <dbReference type="EC" id="2.7.1.1"/>
    </reaction>
    <physiologicalReaction direction="left-to-right" evidence="3">
        <dbReference type="Rhea" id="RHEA:22741"/>
    </physiologicalReaction>
</comment>
<comment type="catalytic activity">
    <reaction evidence="2">
        <text>D-fructose + ATP = D-fructose 6-phosphate + ADP + H(+)</text>
        <dbReference type="Rhea" id="RHEA:16125"/>
        <dbReference type="ChEBI" id="CHEBI:15378"/>
        <dbReference type="ChEBI" id="CHEBI:30616"/>
        <dbReference type="ChEBI" id="CHEBI:37721"/>
        <dbReference type="ChEBI" id="CHEBI:61527"/>
        <dbReference type="ChEBI" id="CHEBI:456216"/>
        <dbReference type="EC" id="2.7.1.1"/>
    </reaction>
    <physiologicalReaction direction="left-to-right" evidence="2">
        <dbReference type="Rhea" id="RHEA:16126"/>
    </physiologicalReaction>
</comment>
<comment type="catalytic activity">
    <reaction evidence="3">
        <text>D-glucose + ATP = D-glucose 6-phosphate + ADP + H(+)</text>
        <dbReference type="Rhea" id="RHEA:17825"/>
        <dbReference type="ChEBI" id="CHEBI:4167"/>
        <dbReference type="ChEBI" id="CHEBI:15378"/>
        <dbReference type="ChEBI" id="CHEBI:30616"/>
        <dbReference type="ChEBI" id="CHEBI:61548"/>
        <dbReference type="ChEBI" id="CHEBI:456216"/>
        <dbReference type="EC" id="2.7.1.1"/>
    </reaction>
    <physiologicalReaction direction="left-to-right" evidence="3">
        <dbReference type="Rhea" id="RHEA:17826"/>
    </physiologicalReaction>
</comment>
<comment type="activity regulation">
    <text evidence="3">Hexokinase activity is specifically inhibited by 2,6-disubstituted glucosamines.</text>
</comment>
<comment type="pathway">
    <text evidence="3">Carbohydrate metabolism; hexose metabolism.</text>
</comment>
<comment type="pathway">
    <text evidence="3">Carbohydrate degradation; glycolysis; D-glyceraldehyde 3-phosphate and glycerone phosphate from D-glucose: step 1/4.</text>
</comment>
<comment type="subunit">
    <text evidence="1 3">Monomer (By similarity). Interacts with TIGAR; the interaction increases hexokinase activity in a hypoxia- and HIF1A-dependent manner (By similarity).</text>
</comment>
<comment type="subcellular location">
    <subcellularLocation>
        <location evidence="3">Mitochondrion outer membrane</location>
        <topology evidence="3">Peripheral membrane protein</topology>
    </subcellularLocation>
    <subcellularLocation>
        <location evidence="3">Cytoplasm</location>
        <location evidence="3">Cytosol</location>
    </subcellularLocation>
    <text evidence="3">The mitochondrial-binding peptide (MBP) region promotes association with the mitochondrial outer membrane. The interaction with the mitochondrial outer membrane via the mitochondrial-binding peptide (MBP) region promotes higher stability of the protein. Release from the mitochondrial outer membrane into the cytosol induces permeability transition pore (PTP) opening and apoptosis.</text>
</comment>
<comment type="domain">
    <text evidence="3">The N- and C-terminal halves of the protein contain a hexokinase domain. In contrast to hexokinase-1 and -3 (HK1 and HK3, respectively), both hexokinase domains display catalytic activity. The region connecting the two hexokinase domains is required for the catalytic activity of the N-terminal hexokinase domain. The N-terminal half regulates stability of the whole enzyme.</text>
</comment>
<comment type="similarity">
    <text evidence="4 6">Belongs to the hexokinase family.</text>
</comment>
<feature type="chain" id="PRO_0000286048" description="Hexokinase-2">
    <location>
        <begin position="1"/>
        <end position="917"/>
    </location>
</feature>
<feature type="domain" description="Hexokinase 1" evidence="4">
    <location>
        <begin position="16"/>
        <end position="458"/>
    </location>
</feature>
<feature type="domain" description="Hexokinase 2" evidence="4">
    <location>
        <begin position="464"/>
        <end position="906"/>
    </location>
</feature>
<feature type="region of interest" description="Mitochondrial-binding peptide (MBP)" evidence="3">
    <location>
        <begin position="1"/>
        <end position="16"/>
    </location>
</feature>
<feature type="region of interest" description="Hexokinase small subdomain 1" evidence="4">
    <location>
        <begin position="73"/>
        <end position="207"/>
    </location>
</feature>
<feature type="region of interest" description="Hexokinase large subdomain 1" evidence="4">
    <location>
        <begin position="208"/>
        <end position="447"/>
    </location>
</feature>
<feature type="region of interest" description="Hexokinase small subdomain 2" evidence="4">
    <location>
        <begin position="521"/>
        <end position="655"/>
    </location>
</feature>
<feature type="region of interest" description="Hexokinase large subdomain 2" evidence="4">
    <location>
        <begin position="656"/>
        <end position="895"/>
    </location>
</feature>
<feature type="binding site" evidence="1">
    <location>
        <position position="30"/>
    </location>
    <ligand>
        <name>ATP</name>
        <dbReference type="ChEBI" id="CHEBI:30616"/>
        <label>1</label>
    </ligand>
</feature>
<feature type="binding site" evidence="1">
    <location>
        <begin position="84"/>
        <end position="89"/>
    </location>
    <ligand>
        <name>ATP</name>
        <dbReference type="ChEBI" id="CHEBI:30616"/>
        <label>1</label>
    </ligand>
</feature>
<feature type="binding site" evidence="3">
    <location>
        <begin position="84"/>
        <end position="88"/>
    </location>
    <ligand>
        <name>D-glucose 6-phosphate</name>
        <dbReference type="ChEBI" id="CHEBI:61548"/>
        <label>1</label>
    </ligand>
</feature>
<feature type="binding site" evidence="3">
    <location>
        <begin position="155"/>
        <end position="156"/>
    </location>
    <ligand>
        <name>D-glucose</name>
        <dbReference type="ChEBI" id="CHEBI:4167"/>
        <label>1</label>
    </ligand>
</feature>
<feature type="binding site" evidence="3">
    <location>
        <begin position="172"/>
        <end position="173"/>
    </location>
    <ligand>
        <name>D-glucose</name>
        <dbReference type="ChEBI" id="CHEBI:4167"/>
        <label>1</label>
    </ligand>
</feature>
<feature type="binding site" evidence="3">
    <location>
        <begin position="208"/>
        <end position="209"/>
    </location>
    <ligand>
        <name>D-glucose</name>
        <dbReference type="ChEBI" id="CHEBI:4167"/>
        <label>1</label>
    </ligand>
</feature>
<feature type="binding site" evidence="3">
    <location>
        <position position="209"/>
    </location>
    <ligand>
        <name>D-glucose 6-phosphate</name>
        <dbReference type="ChEBI" id="CHEBI:61548"/>
        <label>1</label>
    </ligand>
</feature>
<feature type="binding site" evidence="3">
    <location>
        <position position="235"/>
    </location>
    <ligand>
        <name>D-glucose</name>
        <dbReference type="ChEBI" id="CHEBI:4167"/>
        <label>1</label>
    </ligand>
</feature>
<feature type="binding site" evidence="3">
    <location>
        <position position="260"/>
    </location>
    <ligand>
        <name>D-glucose</name>
        <dbReference type="ChEBI" id="CHEBI:4167"/>
        <label>1</label>
    </ligand>
</feature>
<feature type="binding site" evidence="3">
    <location>
        <begin position="291"/>
        <end position="294"/>
    </location>
    <ligand>
        <name>D-glucose</name>
        <dbReference type="ChEBI" id="CHEBI:4167"/>
        <label>1</label>
    </ligand>
</feature>
<feature type="binding site" evidence="3">
    <location>
        <begin position="413"/>
        <end position="415"/>
    </location>
    <ligand>
        <name>D-glucose 6-phosphate</name>
        <dbReference type="ChEBI" id="CHEBI:61548"/>
        <label>1</label>
    </ligand>
</feature>
<feature type="binding site" evidence="1">
    <location>
        <begin position="425"/>
        <end position="426"/>
    </location>
    <ligand>
        <name>ATP</name>
        <dbReference type="ChEBI" id="CHEBI:30616"/>
        <label>1</label>
    </ligand>
</feature>
<feature type="binding site" evidence="3">
    <location>
        <position position="449"/>
    </location>
    <ligand>
        <name>D-glucose 6-phosphate</name>
        <dbReference type="ChEBI" id="CHEBI:61548"/>
        <label>1</label>
    </ligand>
</feature>
<feature type="binding site" evidence="1">
    <location>
        <begin position="532"/>
        <end position="537"/>
    </location>
    <ligand>
        <name>ATP</name>
        <dbReference type="ChEBI" id="CHEBI:30616"/>
        <label>2</label>
    </ligand>
</feature>
<feature type="binding site" evidence="3">
    <location>
        <begin position="532"/>
        <end position="536"/>
    </location>
    <ligand>
        <name>D-glucose 6-phosphate</name>
        <dbReference type="ChEBI" id="CHEBI:61548"/>
        <label>2</label>
    </ligand>
</feature>
<feature type="binding site" evidence="3">
    <location>
        <begin position="603"/>
        <end position="604"/>
    </location>
    <ligand>
        <name>D-glucose</name>
        <dbReference type="ChEBI" id="CHEBI:4167"/>
        <label>2</label>
    </ligand>
</feature>
<feature type="binding site" evidence="3">
    <location>
        <begin position="620"/>
        <end position="621"/>
    </location>
    <ligand>
        <name>D-glucose</name>
        <dbReference type="ChEBI" id="CHEBI:4167"/>
        <label>2</label>
    </ligand>
</feature>
<feature type="binding site" evidence="3">
    <location>
        <begin position="656"/>
        <end position="657"/>
    </location>
    <ligand>
        <name>D-glucose</name>
        <dbReference type="ChEBI" id="CHEBI:4167"/>
        <label>2</label>
    </ligand>
</feature>
<feature type="binding site" evidence="3">
    <location>
        <position position="657"/>
    </location>
    <ligand>
        <name>D-glucose 6-phosphate</name>
        <dbReference type="ChEBI" id="CHEBI:61548"/>
        <label>2</label>
    </ligand>
</feature>
<feature type="binding site" evidence="1">
    <location>
        <position position="680"/>
    </location>
    <ligand>
        <name>ATP</name>
        <dbReference type="ChEBI" id="CHEBI:30616"/>
        <label>2</label>
    </ligand>
</feature>
<feature type="binding site" evidence="3">
    <location>
        <position position="680"/>
    </location>
    <ligand>
        <name>D-glucose 6-phosphate</name>
        <dbReference type="ChEBI" id="CHEBI:61548"/>
        <label>2</label>
    </ligand>
</feature>
<feature type="binding site" evidence="3">
    <location>
        <begin position="682"/>
        <end position="683"/>
    </location>
    <ligand>
        <name>D-glucose</name>
        <dbReference type="ChEBI" id="CHEBI:4167"/>
        <label>2</label>
    </ligand>
</feature>
<feature type="binding site" evidence="3">
    <location>
        <position position="708"/>
    </location>
    <ligand>
        <name>D-glucose</name>
        <dbReference type="ChEBI" id="CHEBI:4167"/>
        <label>2</label>
    </ligand>
</feature>
<feature type="binding site" evidence="3">
    <location>
        <begin position="739"/>
        <end position="742"/>
    </location>
    <ligand>
        <name>D-glucose</name>
        <dbReference type="ChEBI" id="CHEBI:4167"/>
        <label>2</label>
    </ligand>
</feature>
<feature type="binding site" evidence="1">
    <location>
        <begin position="747"/>
        <end position="748"/>
    </location>
    <ligand>
        <name>ATP</name>
        <dbReference type="ChEBI" id="CHEBI:30616"/>
        <label>2</label>
    </ligand>
</feature>
<feature type="binding site" evidence="1">
    <location>
        <begin position="784"/>
        <end position="788"/>
    </location>
    <ligand>
        <name>ATP</name>
        <dbReference type="ChEBI" id="CHEBI:30616"/>
        <label>2</label>
    </ligand>
</feature>
<feature type="binding site" evidence="3">
    <location>
        <begin position="861"/>
        <end position="863"/>
    </location>
    <ligand>
        <name>D-glucose 6-phosphate</name>
        <dbReference type="ChEBI" id="CHEBI:61548"/>
        <label>2</label>
    </ligand>
</feature>
<feature type="binding site" evidence="1">
    <location>
        <begin position="863"/>
        <end position="867"/>
    </location>
    <ligand>
        <name>ATP</name>
        <dbReference type="ChEBI" id="CHEBI:30616"/>
        <label>2</label>
    </ligand>
</feature>
<feature type="binding site" evidence="3">
    <location>
        <position position="897"/>
    </location>
    <ligand>
        <name>D-glucose 6-phosphate</name>
        <dbReference type="ChEBI" id="CHEBI:61548"/>
        <label>2</label>
    </ligand>
</feature>
<feature type="modified residue" description="N-acetylmethionine" evidence="3">
    <location>
        <position position="1"/>
    </location>
</feature>
<accession>A2PYL6</accession>
<keyword id="KW-0007">Acetylation</keyword>
<keyword id="KW-0021">Allosteric enzyme</keyword>
<keyword id="KW-0067">ATP-binding</keyword>
<keyword id="KW-0963">Cytoplasm</keyword>
<keyword id="KW-0324">Glycolysis</keyword>
<keyword id="KW-0418">Kinase</keyword>
<keyword id="KW-0472">Membrane</keyword>
<keyword id="KW-0496">Mitochondrion</keyword>
<keyword id="KW-1000">Mitochondrion outer membrane</keyword>
<keyword id="KW-0547">Nucleotide-binding</keyword>
<keyword id="KW-1185">Reference proteome</keyword>
<keyword id="KW-0677">Repeat</keyword>
<keyword id="KW-0808">Transferase</keyword>